<protein>
    <recommendedName>
        <fullName evidence="1">Chorismate synthase</fullName>
        <shortName evidence="1 4">CS</shortName>
        <ecNumber evidence="1">4.2.3.5</ecNumber>
    </recommendedName>
    <alternativeName>
        <fullName evidence="1">5-enolpyruvylshikimate-3-phosphate phospholyase</fullName>
    </alternativeName>
</protein>
<keyword id="KW-0002">3D-structure</keyword>
<keyword id="KW-0028">Amino-acid biosynthesis</keyword>
<keyword id="KW-0057">Aromatic amino acid biosynthesis</keyword>
<keyword id="KW-0274">FAD</keyword>
<keyword id="KW-0285">Flavoprotein</keyword>
<keyword id="KW-0288">FMN</keyword>
<keyword id="KW-0456">Lyase</keyword>
<keyword id="KW-0521">NADP</keyword>
<keyword id="KW-1185">Reference proteome</keyword>
<reference key="1">
    <citation type="journal article" date="1998" name="Nature">
        <title>Deciphering the biology of Mycobacterium tuberculosis from the complete genome sequence.</title>
        <authorList>
            <person name="Cole S.T."/>
            <person name="Brosch R."/>
            <person name="Parkhill J."/>
            <person name="Garnier T."/>
            <person name="Churcher C.M."/>
            <person name="Harris D.E."/>
            <person name="Gordon S.V."/>
            <person name="Eiglmeier K."/>
            <person name="Gas S."/>
            <person name="Barry C.E. III"/>
            <person name="Tekaia F."/>
            <person name="Badcock K."/>
            <person name="Basham D."/>
            <person name="Brown D."/>
            <person name="Chillingworth T."/>
            <person name="Connor R."/>
            <person name="Davies R.M."/>
            <person name="Devlin K."/>
            <person name="Feltwell T."/>
            <person name="Gentles S."/>
            <person name="Hamlin N."/>
            <person name="Holroyd S."/>
            <person name="Hornsby T."/>
            <person name="Jagels K."/>
            <person name="Krogh A."/>
            <person name="McLean J."/>
            <person name="Moule S."/>
            <person name="Murphy L.D."/>
            <person name="Oliver S."/>
            <person name="Osborne J."/>
            <person name="Quail M.A."/>
            <person name="Rajandream M.A."/>
            <person name="Rogers J."/>
            <person name="Rutter S."/>
            <person name="Seeger K."/>
            <person name="Skelton S."/>
            <person name="Squares S."/>
            <person name="Squares R."/>
            <person name="Sulston J.E."/>
            <person name="Taylor K."/>
            <person name="Whitehead S."/>
            <person name="Barrell B.G."/>
        </authorList>
    </citation>
    <scope>NUCLEOTIDE SEQUENCE [LARGE SCALE GENOMIC DNA]</scope>
    <source>
        <strain>ATCC 25618 / H37Rv</strain>
    </source>
</reference>
<reference key="2">
    <citation type="journal article" date="2008" name="BMC Syst. Biol.">
        <title>targetTB: a target identification pipeline for Mycobacterium tuberculosis through an interactome, reactome and genome-scale structural analysis.</title>
        <authorList>
            <person name="Raman K."/>
            <person name="Yeturu K."/>
            <person name="Chandra N."/>
        </authorList>
    </citation>
    <scope>IDENTIFICATION AS A DRUG TARGET [LARGE SCALE ANALYSIS]</scope>
</reference>
<reference key="3">
    <citation type="journal article" date="2011" name="Mol. Cell. Proteomics">
        <title>Proteogenomic analysis of Mycobacterium tuberculosis by high resolution mass spectrometry.</title>
        <authorList>
            <person name="Kelkar D.S."/>
            <person name="Kumar D."/>
            <person name="Kumar P."/>
            <person name="Balakrishnan L."/>
            <person name="Muthusamy B."/>
            <person name="Yadav A.K."/>
            <person name="Shrivastava P."/>
            <person name="Marimuthu A."/>
            <person name="Anand S."/>
            <person name="Sundaram H."/>
            <person name="Kingsbury R."/>
            <person name="Harsha H.C."/>
            <person name="Nair B."/>
            <person name="Prasad T.S."/>
            <person name="Chauhan D.S."/>
            <person name="Katoch K."/>
            <person name="Katoch V.M."/>
            <person name="Kumar P."/>
            <person name="Chaerkady R."/>
            <person name="Ramachandran S."/>
            <person name="Dash D."/>
            <person name="Pandey A."/>
        </authorList>
    </citation>
    <scope>IDENTIFICATION BY MASS SPECTROMETRY [LARGE SCALE ANALYSIS]</scope>
    <source>
        <strain>ATCC 25618 / H37Rv</strain>
    </source>
</reference>
<reference key="4">
    <citation type="journal article" date="2006" name="J. Struct. Biol.">
        <title>Structure of chorismate synthase from Mycobacterium tuberculosis.</title>
        <authorList>
            <person name="Dias M.V."/>
            <person name="Borges J.C."/>
            <person name="Ely F."/>
            <person name="Pereira J.H."/>
            <person name="Canduri F."/>
            <person name="Ramos C.H."/>
            <person name="Frazzon J."/>
            <person name="Palma M.S."/>
            <person name="Basso L.A."/>
            <person name="Santos D.S."/>
            <person name="de Azevedo W.F. Jr."/>
        </authorList>
    </citation>
    <scope>X-RAY CRYSTALLOGRAPHY (2.65 ANGSTROMS)</scope>
    <scope>SUBUNIT</scope>
</reference>
<reference key="5">
    <citation type="submission" date="2007-03" db="PDB data bank">
        <title>Crystal structure of chorismate synthase from mycobacterium tuberculosis at 2.22 angstroms of resolution.</title>
        <authorList>
            <person name="Dias M.V.B."/>
            <person name="Dos Santos B.B."/>
            <person name="Ely F."/>
            <person name="Basso L.A."/>
            <person name="Santos D.S."/>
            <person name="de Azevedo W.F. Jr."/>
        </authorList>
    </citation>
    <scope>X-RAY CRYSTALLOGRAPHY (2.22 ANGSTROMS)</scope>
</reference>
<reference key="6">
    <citation type="submission" date="2008-07" db="PDB data bank">
        <title>Mycobacterium tuberculosis chorismate synthase in complex with NCA and FMN.</title>
        <authorList>
            <person name="Bruning M."/>
            <person name="Bourenkov G.P."/>
            <person name="Strizhov N.I."/>
            <person name="Bartunik H.D."/>
        </authorList>
    </citation>
    <scope>X-RAY CRYSTALLOGRAPHY (1.65 ANGSTROMS) IN COMPLEX WITH NADP ANALOG; FMN</scope>
    <scope>COFACTOR</scope>
</reference>
<reference key="7">
    <citation type="journal article" date="2013" name="J. Struct. Biol.">
        <title>In-house UV radiation-damage-induced phasing of selenomethionine-labeled protein structures.</title>
        <authorList>
            <person name="Pereira P.J."/>
            <person name="Royant A."/>
            <person name="Panjikar S."/>
            <person name="de Sanctis D."/>
        </authorList>
    </citation>
    <scope>X-RAY CRYSTALLOGRAPHY (2.30 ANGSTROMS)</scope>
</reference>
<gene>
    <name evidence="1" type="primary">aroC</name>
    <name type="synonym">aroF</name>
    <name type="ordered locus">Rv2540c</name>
    <name type="ORF">MTCY159.16</name>
</gene>
<feature type="chain" id="PRO_0000140615" description="Chorismate synthase">
    <location>
        <begin position="1"/>
        <end position="401"/>
    </location>
</feature>
<feature type="binding site" evidence="1 3">
    <location>
        <position position="40"/>
    </location>
    <ligand>
        <name>NADP(+)</name>
        <dbReference type="ChEBI" id="CHEBI:58349"/>
    </ligand>
</feature>
<feature type="binding site" evidence="1 3">
    <location>
        <position position="46"/>
    </location>
    <ligand>
        <name>NADP(+)</name>
        <dbReference type="ChEBI" id="CHEBI:58349"/>
    </ligand>
</feature>
<feature type="binding site" evidence="1">
    <location>
        <begin position="135"/>
        <end position="137"/>
    </location>
    <ligand>
        <name>FMN</name>
        <dbReference type="ChEBI" id="CHEBI:58210"/>
    </ligand>
</feature>
<feature type="binding site" evidence="1 3">
    <location>
        <begin position="256"/>
        <end position="257"/>
    </location>
    <ligand>
        <name>FMN</name>
        <dbReference type="ChEBI" id="CHEBI:58210"/>
    </ligand>
</feature>
<feature type="binding site" evidence="1">
    <location>
        <position position="300"/>
    </location>
    <ligand>
        <name>FMN</name>
        <dbReference type="ChEBI" id="CHEBI:58210"/>
    </ligand>
</feature>
<feature type="binding site" evidence="1 3">
    <location>
        <begin position="315"/>
        <end position="319"/>
    </location>
    <ligand>
        <name>FMN</name>
        <dbReference type="ChEBI" id="CHEBI:58210"/>
    </ligand>
</feature>
<feature type="binding site" evidence="1 3">
    <location>
        <position position="341"/>
    </location>
    <ligand>
        <name>FMN</name>
        <dbReference type="ChEBI" id="CHEBI:58210"/>
    </ligand>
</feature>
<feature type="strand" evidence="7">
    <location>
        <begin position="3"/>
        <end position="7"/>
    </location>
</feature>
<feature type="strand" evidence="7">
    <location>
        <begin position="12"/>
        <end position="21"/>
    </location>
</feature>
<feature type="strand" evidence="5">
    <location>
        <begin position="24"/>
        <end position="27"/>
    </location>
</feature>
<feature type="helix" evidence="7">
    <location>
        <begin position="30"/>
        <end position="40"/>
    </location>
</feature>
<feature type="helix" evidence="9">
    <location>
        <begin position="46"/>
        <end position="48"/>
    </location>
</feature>
<feature type="helix" evidence="8">
    <location>
        <begin position="54"/>
        <end position="56"/>
    </location>
</feature>
<feature type="strand" evidence="7">
    <location>
        <begin position="57"/>
        <end position="64"/>
    </location>
</feature>
<feature type="strand" evidence="5">
    <location>
        <begin position="67"/>
        <end position="71"/>
    </location>
</feature>
<feature type="strand" evidence="7">
    <location>
        <begin position="73"/>
        <end position="78"/>
    </location>
</feature>
<feature type="helix" evidence="7">
    <location>
        <begin position="82"/>
        <end position="85"/>
    </location>
</feature>
<feature type="turn" evidence="7">
    <location>
        <begin position="86"/>
        <end position="89"/>
    </location>
</feature>
<feature type="helix" evidence="7">
    <location>
        <begin position="96"/>
        <end position="100"/>
    </location>
</feature>
<feature type="helix" evidence="7">
    <location>
        <begin position="103"/>
        <end position="105"/>
    </location>
</feature>
<feature type="helix" evidence="7">
    <location>
        <begin position="117"/>
        <end position="124"/>
    </location>
</feature>
<feature type="strand" evidence="7">
    <location>
        <begin position="127"/>
        <end position="129"/>
    </location>
</feature>
<feature type="helix" evidence="7">
    <location>
        <begin position="130"/>
        <end position="136"/>
    </location>
</feature>
<feature type="helix" evidence="7">
    <location>
        <begin position="138"/>
        <end position="140"/>
    </location>
</feature>
<feature type="helix" evidence="7">
    <location>
        <begin position="141"/>
        <end position="159"/>
    </location>
</feature>
<feature type="strand" evidence="7">
    <location>
        <begin position="162"/>
        <end position="170"/>
    </location>
</feature>
<feature type="helix" evidence="7">
    <location>
        <begin position="183"/>
        <end position="185"/>
    </location>
</feature>
<feature type="helix" evidence="7">
    <location>
        <begin position="186"/>
        <end position="191"/>
    </location>
</feature>
<feature type="strand" evidence="6">
    <location>
        <begin position="196"/>
        <end position="198"/>
    </location>
</feature>
<feature type="helix" evidence="7">
    <location>
        <begin position="199"/>
        <end position="215"/>
    </location>
</feature>
<feature type="strand" evidence="7">
    <location>
        <begin position="221"/>
        <end position="229"/>
    </location>
</feature>
<feature type="strand" evidence="7">
    <location>
        <begin position="237"/>
        <end position="239"/>
    </location>
</feature>
<feature type="helix" evidence="7">
    <location>
        <begin position="240"/>
        <end position="242"/>
    </location>
</feature>
<feature type="helix" evidence="7">
    <location>
        <begin position="244"/>
        <end position="253"/>
    </location>
</feature>
<feature type="strand" evidence="7">
    <location>
        <begin position="258"/>
        <end position="263"/>
    </location>
</feature>
<feature type="helix" evidence="7">
    <location>
        <begin position="266"/>
        <end position="269"/>
    </location>
</feature>
<feature type="helix" evidence="7">
    <location>
        <begin position="274"/>
        <end position="277"/>
    </location>
</feature>
<feature type="strand" evidence="9">
    <location>
        <begin position="289"/>
        <end position="291"/>
    </location>
</feature>
<feature type="turn" evidence="7">
    <location>
        <begin position="294"/>
        <end position="297"/>
    </location>
</feature>
<feature type="strand" evidence="7">
    <location>
        <begin position="308"/>
        <end position="314"/>
    </location>
</feature>
<feature type="turn" evidence="7">
    <location>
        <begin position="321"/>
        <end position="323"/>
    </location>
</feature>
<feature type="strand" evidence="7">
    <location>
        <begin position="325"/>
        <end position="327"/>
    </location>
</feature>
<feature type="turn" evidence="7">
    <location>
        <begin position="329"/>
        <end position="331"/>
    </location>
</feature>
<feature type="strand" evidence="7">
    <location>
        <begin position="334"/>
        <end position="336"/>
    </location>
</feature>
<feature type="helix" evidence="7">
    <location>
        <begin position="347"/>
        <end position="370"/>
    </location>
</feature>
<feature type="helix" evidence="7">
    <location>
        <begin position="375"/>
        <end position="390"/>
    </location>
</feature>
<name>AROC_MYCTU</name>
<sequence>MLRWITAGESHGRALVAVVEGMVAGVHVTSADIADQLARRRLGYGRGARMTFERDAVTVLSGIRHGSTLGGPIAIEIGNTEWPKWETVMAADPVDPAELADVARNAPLTRPRPGHADYAGMLKYGFDDARPVLERASARETAARVAAGTVARAFLRQALGVEVLSHVISIGASAPYEGPPPRAEDLPAIDASPVRAYDKAAEADMIAQIEAAKKDGDTLGGVVEAVALGLPVGLGSFTSGDHRLDSQLAAAVMGIQAIKGVEIGDGFQTARRRGSRAHDEMYPGPDGVVRSTNRAGGLEGGMTNGQPLRVRAAMKPISTVPRALATVDLATGDEAVAIHQRSDVCAVPAAGVVVETMVALVLARAALEKFGGDSLAETQRNIAAYQRSVADREAPAARVSG</sequence>
<dbReference type="EC" id="4.2.3.5" evidence="1"/>
<dbReference type="EMBL" id="AL123456">
    <property type="protein sequence ID" value="CCP45335.1"/>
    <property type="molecule type" value="Genomic_DNA"/>
</dbReference>
<dbReference type="PIR" id="H70658">
    <property type="entry name" value="H70658"/>
</dbReference>
<dbReference type="RefSeq" id="NP_217056.1">
    <property type="nucleotide sequence ID" value="NC_000962.3"/>
</dbReference>
<dbReference type="RefSeq" id="WP_003413027.1">
    <property type="nucleotide sequence ID" value="NZ_NVQJ01000032.1"/>
</dbReference>
<dbReference type="PDB" id="1ZTB">
    <property type="method" value="X-ray"/>
    <property type="resolution" value="2.65 A"/>
    <property type="chains" value="A=1-401"/>
</dbReference>
<dbReference type="PDB" id="2G85">
    <property type="method" value="X-ray"/>
    <property type="resolution" value="2.22 A"/>
    <property type="chains" value="A=1-401"/>
</dbReference>
<dbReference type="PDB" id="2O11">
    <property type="method" value="X-ray"/>
    <property type="resolution" value="1.65 A"/>
    <property type="chains" value="A=1-401"/>
</dbReference>
<dbReference type="PDB" id="2O12">
    <property type="method" value="X-ray"/>
    <property type="resolution" value="1.72 A"/>
    <property type="chains" value="A=1-401"/>
</dbReference>
<dbReference type="PDB" id="2QHF">
    <property type="method" value="X-ray"/>
    <property type="resolution" value="1.65 A"/>
    <property type="chains" value="A=1-401"/>
</dbReference>
<dbReference type="PDB" id="4BAI">
    <property type="method" value="X-ray"/>
    <property type="resolution" value="2.30 A"/>
    <property type="chains" value="A=1-401"/>
</dbReference>
<dbReference type="PDB" id="4BAJ">
    <property type="method" value="X-ray"/>
    <property type="resolution" value="2.30 A"/>
    <property type="chains" value="A=1-401"/>
</dbReference>
<dbReference type="PDBsum" id="1ZTB"/>
<dbReference type="PDBsum" id="2G85"/>
<dbReference type="PDBsum" id="2O11"/>
<dbReference type="PDBsum" id="2O12"/>
<dbReference type="PDBsum" id="2QHF"/>
<dbReference type="PDBsum" id="4BAI"/>
<dbReference type="PDBsum" id="4BAJ"/>
<dbReference type="SMR" id="P9WPY1"/>
<dbReference type="FunCoup" id="P9WPY1">
    <property type="interactions" value="368"/>
</dbReference>
<dbReference type="STRING" id="83332.Rv2540c"/>
<dbReference type="PaxDb" id="83332-Rv2540c"/>
<dbReference type="GeneID" id="887379"/>
<dbReference type="KEGG" id="mtu:Rv2540c"/>
<dbReference type="KEGG" id="mtv:RVBD_2540c"/>
<dbReference type="TubercuList" id="Rv2540c"/>
<dbReference type="eggNOG" id="COG0082">
    <property type="taxonomic scope" value="Bacteria"/>
</dbReference>
<dbReference type="InParanoid" id="P9WPY1"/>
<dbReference type="OrthoDB" id="9771806at2"/>
<dbReference type="PhylomeDB" id="P9WPY1"/>
<dbReference type="Reactome" id="R-MTU-964903">
    <property type="pathway name" value="Chorismate via Shikimate Pathway"/>
</dbReference>
<dbReference type="UniPathway" id="UPA00053">
    <property type="reaction ID" value="UER00090"/>
</dbReference>
<dbReference type="EvolutionaryTrace" id="P9WPY1"/>
<dbReference type="Proteomes" id="UP000001584">
    <property type="component" value="Chromosome"/>
</dbReference>
<dbReference type="GO" id="GO:0005829">
    <property type="term" value="C:cytosol"/>
    <property type="evidence" value="ECO:0000318"/>
    <property type="project" value="GO_Central"/>
</dbReference>
<dbReference type="GO" id="GO:0004107">
    <property type="term" value="F:chorismate synthase activity"/>
    <property type="evidence" value="ECO:0000314"/>
    <property type="project" value="MTBBASE"/>
</dbReference>
<dbReference type="GO" id="GO:0010181">
    <property type="term" value="F:FMN binding"/>
    <property type="evidence" value="ECO:0000314"/>
    <property type="project" value="MTBBASE"/>
</dbReference>
<dbReference type="GO" id="GO:0051287">
    <property type="term" value="F:NAD binding"/>
    <property type="evidence" value="ECO:0000314"/>
    <property type="project" value="MTBBASE"/>
</dbReference>
<dbReference type="GO" id="GO:0016651">
    <property type="term" value="F:oxidoreductase activity, acting on NAD(P)H"/>
    <property type="evidence" value="ECO:0000314"/>
    <property type="project" value="MTBBASE"/>
</dbReference>
<dbReference type="GO" id="GO:0008652">
    <property type="term" value="P:amino acid biosynthetic process"/>
    <property type="evidence" value="ECO:0007669"/>
    <property type="project" value="UniProtKB-KW"/>
</dbReference>
<dbReference type="GO" id="GO:0009073">
    <property type="term" value="P:aromatic amino acid family biosynthetic process"/>
    <property type="evidence" value="ECO:0000318"/>
    <property type="project" value="GO_Central"/>
</dbReference>
<dbReference type="GO" id="GO:0009423">
    <property type="term" value="P:chorismate biosynthetic process"/>
    <property type="evidence" value="ECO:0000318"/>
    <property type="project" value="GO_Central"/>
</dbReference>
<dbReference type="CDD" id="cd07304">
    <property type="entry name" value="Chorismate_synthase"/>
    <property type="match status" value="1"/>
</dbReference>
<dbReference type="FunFam" id="3.60.150.10:FF:000002">
    <property type="entry name" value="Chorismate synthase"/>
    <property type="match status" value="1"/>
</dbReference>
<dbReference type="Gene3D" id="3.60.150.10">
    <property type="entry name" value="Chorismate synthase AroC"/>
    <property type="match status" value="1"/>
</dbReference>
<dbReference type="HAMAP" id="MF_00300">
    <property type="entry name" value="Chorismate_synth"/>
    <property type="match status" value="1"/>
</dbReference>
<dbReference type="InterPro" id="IPR000453">
    <property type="entry name" value="Chorismate_synth"/>
</dbReference>
<dbReference type="InterPro" id="IPR035904">
    <property type="entry name" value="Chorismate_synth_AroC_sf"/>
</dbReference>
<dbReference type="InterPro" id="IPR020541">
    <property type="entry name" value="Chorismate_synthase_CS"/>
</dbReference>
<dbReference type="NCBIfam" id="TIGR00033">
    <property type="entry name" value="aroC"/>
    <property type="match status" value="1"/>
</dbReference>
<dbReference type="NCBIfam" id="NF003793">
    <property type="entry name" value="PRK05382.1"/>
    <property type="match status" value="1"/>
</dbReference>
<dbReference type="PANTHER" id="PTHR21085">
    <property type="entry name" value="CHORISMATE SYNTHASE"/>
    <property type="match status" value="1"/>
</dbReference>
<dbReference type="PANTHER" id="PTHR21085:SF0">
    <property type="entry name" value="CHORISMATE SYNTHASE"/>
    <property type="match status" value="1"/>
</dbReference>
<dbReference type="Pfam" id="PF01264">
    <property type="entry name" value="Chorismate_synt"/>
    <property type="match status" value="1"/>
</dbReference>
<dbReference type="PIRSF" id="PIRSF001456">
    <property type="entry name" value="Chorismate_synth"/>
    <property type="match status" value="1"/>
</dbReference>
<dbReference type="SUPFAM" id="SSF103263">
    <property type="entry name" value="Chorismate synthase, AroC"/>
    <property type="match status" value="1"/>
</dbReference>
<dbReference type="PROSITE" id="PS00787">
    <property type="entry name" value="CHORISMATE_SYNTHASE_1"/>
    <property type="match status" value="1"/>
</dbReference>
<dbReference type="PROSITE" id="PS00788">
    <property type="entry name" value="CHORISMATE_SYNTHASE_2"/>
    <property type="match status" value="1"/>
</dbReference>
<dbReference type="PROSITE" id="PS00789">
    <property type="entry name" value="CHORISMATE_SYNTHASE_3"/>
    <property type="match status" value="1"/>
</dbReference>
<proteinExistence type="evidence at protein level"/>
<evidence type="ECO:0000255" key="1">
    <source>
        <dbReference type="HAMAP-Rule" id="MF_00300"/>
    </source>
</evidence>
<evidence type="ECO:0000269" key="2">
    <source>
    </source>
</evidence>
<evidence type="ECO:0000269" key="3">
    <source ref="6"/>
</evidence>
<evidence type="ECO:0000303" key="4">
    <source>
    </source>
</evidence>
<evidence type="ECO:0007829" key="5">
    <source>
        <dbReference type="PDB" id="1ZTB"/>
    </source>
</evidence>
<evidence type="ECO:0007829" key="6">
    <source>
        <dbReference type="PDB" id="2G85"/>
    </source>
</evidence>
<evidence type="ECO:0007829" key="7">
    <source>
        <dbReference type="PDB" id="2O11"/>
    </source>
</evidence>
<evidence type="ECO:0007829" key="8">
    <source>
        <dbReference type="PDB" id="2O12"/>
    </source>
</evidence>
<evidence type="ECO:0007829" key="9">
    <source>
        <dbReference type="PDB" id="2QHF"/>
    </source>
</evidence>
<accession>P9WPY1</accession>
<accession>L0T9X6</accession>
<accession>P63611</accession>
<accession>P95013</accession>
<comment type="function">
    <text evidence="1">Catalyzes the anti-1,4-elimination of the C-3 phosphate and the C-6 proR hydrogen from 5-enolpyruvylshikimate-3-phosphate (EPSP) to yield chorismate, which is the branch point compound that serves as the starting substrate for the three terminal pathways of aromatic amino acid biosynthesis. This reaction introduces a second double bond into the aromatic ring system.</text>
</comment>
<comment type="catalytic activity">
    <reaction evidence="1">
        <text>5-O-(1-carboxyvinyl)-3-phosphoshikimate = chorismate + phosphate</text>
        <dbReference type="Rhea" id="RHEA:21020"/>
        <dbReference type="ChEBI" id="CHEBI:29748"/>
        <dbReference type="ChEBI" id="CHEBI:43474"/>
        <dbReference type="ChEBI" id="CHEBI:57701"/>
        <dbReference type="EC" id="4.2.3.5"/>
    </reaction>
</comment>
<comment type="cofactor">
    <cofactor evidence="1 3">
        <name>FMNH2</name>
        <dbReference type="ChEBI" id="CHEBI:57618"/>
    </cofactor>
    <text evidence="1 3">Reduced FMN (FMNH(2)).</text>
</comment>
<comment type="pathway">
    <text evidence="1">Metabolic intermediate biosynthesis; chorismate biosynthesis; chorismate from D-erythrose 4-phosphate and phosphoenolpyruvate: step 7/7.</text>
</comment>
<comment type="subunit">
    <text evidence="1 2">Homotetramer: dimer of dimers.</text>
</comment>
<comment type="miscellaneous">
    <text>Was identified as a high-confidence drug target.</text>
</comment>
<comment type="similarity">
    <text evidence="1">Belongs to the chorismate synthase family.</text>
</comment>
<organism>
    <name type="scientific">Mycobacterium tuberculosis (strain ATCC 25618 / H37Rv)</name>
    <dbReference type="NCBI Taxonomy" id="83332"/>
    <lineage>
        <taxon>Bacteria</taxon>
        <taxon>Bacillati</taxon>
        <taxon>Actinomycetota</taxon>
        <taxon>Actinomycetes</taxon>
        <taxon>Mycobacteriales</taxon>
        <taxon>Mycobacteriaceae</taxon>
        <taxon>Mycobacterium</taxon>
        <taxon>Mycobacterium tuberculosis complex</taxon>
    </lineage>
</organism>